<accession>Q8ZD58</accession>
<accession>Q0WDF7</accession>
<evidence type="ECO:0000255" key="1">
    <source>
        <dbReference type="HAMAP-Rule" id="MF_01707"/>
    </source>
</evidence>
<keyword id="KW-0067">ATP-binding</keyword>
<keyword id="KW-0997">Cell inner membrane</keyword>
<keyword id="KW-1003">Cell membrane</keyword>
<keyword id="KW-0201">Cytochrome c-type biogenesis</keyword>
<keyword id="KW-0472">Membrane</keyword>
<keyword id="KW-0547">Nucleotide-binding</keyword>
<keyword id="KW-1185">Reference proteome</keyword>
<keyword id="KW-1278">Translocase</keyword>
<keyword id="KW-0813">Transport</keyword>
<dbReference type="EC" id="7.6.2.5" evidence="1"/>
<dbReference type="EMBL" id="AL590842">
    <property type="protein sequence ID" value="CAL21353.1"/>
    <property type="molecule type" value="Genomic_DNA"/>
</dbReference>
<dbReference type="EMBL" id="AE009952">
    <property type="protein sequence ID" value="AAM85136.1"/>
    <property type="molecule type" value="Genomic_DNA"/>
</dbReference>
<dbReference type="EMBL" id="AE017042">
    <property type="protein sequence ID" value="AAS62635.1"/>
    <property type="molecule type" value="Genomic_DNA"/>
</dbReference>
<dbReference type="PIR" id="AF0333">
    <property type="entry name" value="AF0333"/>
</dbReference>
<dbReference type="RefSeq" id="WP_002209693.1">
    <property type="nucleotide sequence ID" value="NZ_WUCM01000012.1"/>
</dbReference>
<dbReference type="RefSeq" id="YP_002347681.1">
    <property type="nucleotide sequence ID" value="NC_003143.1"/>
</dbReference>
<dbReference type="SMR" id="Q8ZD58"/>
<dbReference type="STRING" id="214092.YPO2734"/>
<dbReference type="PaxDb" id="214092-YPO2734"/>
<dbReference type="DNASU" id="1146514"/>
<dbReference type="EnsemblBacteria" id="AAS62635">
    <property type="protein sequence ID" value="AAS62635"/>
    <property type="gene ID" value="YP_2430"/>
</dbReference>
<dbReference type="GeneID" id="57975955"/>
<dbReference type="KEGG" id="ype:YPO2734"/>
<dbReference type="KEGG" id="ypk:y1567"/>
<dbReference type="KEGG" id="ypm:YP_2430"/>
<dbReference type="PATRIC" id="fig|214092.21.peg.3177"/>
<dbReference type="eggNOG" id="COG4133">
    <property type="taxonomic scope" value="Bacteria"/>
</dbReference>
<dbReference type="HOGENOM" id="CLU_000604_1_2_6"/>
<dbReference type="OMA" id="NLAWLCA"/>
<dbReference type="OrthoDB" id="9800654at2"/>
<dbReference type="Proteomes" id="UP000000815">
    <property type="component" value="Chromosome"/>
</dbReference>
<dbReference type="Proteomes" id="UP000001019">
    <property type="component" value="Chromosome"/>
</dbReference>
<dbReference type="Proteomes" id="UP000002490">
    <property type="component" value="Chromosome"/>
</dbReference>
<dbReference type="GO" id="GO:0005886">
    <property type="term" value="C:plasma membrane"/>
    <property type="evidence" value="ECO:0007669"/>
    <property type="project" value="UniProtKB-SubCell"/>
</dbReference>
<dbReference type="GO" id="GO:0015439">
    <property type="term" value="F:ABC-type heme transporter activity"/>
    <property type="evidence" value="ECO:0007669"/>
    <property type="project" value="UniProtKB-EC"/>
</dbReference>
<dbReference type="GO" id="GO:0005524">
    <property type="term" value="F:ATP binding"/>
    <property type="evidence" value="ECO:0007669"/>
    <property type="project" value="UniProtKB-KW"/>
</dbReference>
<dbReference type="GO" id="GO:0016887">
    <property type="term" value="F:ATP hydrolysis activity"/>
    <property type="evidence" value="ECO:0007669"/>
    <property type="project" value="InterPro"/>
</dbReference>
<dbReference type="GO" id="GO:0017004">
    <property type="term" value="P:cytochrome complex assembly"/>
    <property type="evidence" value="ECO:0007669"/>
    <property type="project" value="UniProtKB-KW"/>
</dbReference>
<dbReference type="CDD" id="cd03231">
    <property type="entry name" value="ABC_CcmA_heme_exporter"/>
    <property type="match status" value="1"/>
</dbReference>
<dbReference type="Gene3D" id="3.40.50.300">
    <property type="entry name" value="P-loop containing nucleotide triphosphate hydrolases"/>
    <property type="match status" value="1"/>
</dbReference>
<dbReference type="InterPro" id="IPR003593">
    <property type="entry name" value="AAA+_ATPase"/>
</dbReference>
<dbReference type="InterPro" id="IPR003439">
    <property type="entry name" value="ABC_transporter-like_ATP-bd"/>
</dbReference>
<dbReference type="InterPro" id="IPR017871">
    <property type="entry name" value="ABC_transporter-like_CS"/>
</dbReference>
<dbReference type="InterPro" id="IPR005895">
    <property type="entry name" value="ABC_transptr_haem_export_CcmA"/>
</dbReference>
<dbReference type="InterPro" id="IPR027417">
    <property type="entry name" value="P-loop_NTPase"/>
</dbReference>
<dbReference type="NCBIfam" id="TIGR01189">
    <property type="entry name" value="ccmA"/>
    <property type="match status" value="1"/>
</dbReference>
<dbReference type="NCBIfam" id="NF010061">
    <property type="entry name" value="PRK13538.1"/>
    <property type="match status" value="1"/>
</dbReference>
<dbReference type="PANTHER" id="PTHR43499">
    <property type="entry name" value="ABC TRANSPORTER I FAMILY MEMBER 1"/>
    <property type="match status" value="1"/>
</dbReference>
<dbReference type="PANTHER" id="PTHR43499:SF1">
    <property type="entry name" value="ABC TRANSPORTER I FAMILY MEMBER 1"/>
    <property type="match status" value="1"/>
</dbReference>
<dbReference type="Pfam" id="PF00005">
    <property type="entry name" value="ABC_tran"/>
    <property type="match status" value="1"/>
</dbReference>
<dbReference type="SMART" id="SM00382">
    <property type="entry name" value="AAA"/>
    <property type="match status" value="1"/>
</dbReference>
<dbReference type="SUPFAM" id="SSF52540">
    <property type="entry name" value="P-loop containing nucleoside triphosphate hydrolases"/>
    <property type="match status" value="1"/>
</dbReference>
<dbReference type="PROSITE" id="PS00211">
    <property type="entry name" value="ABC_TRANSPORTER_1"/>
    <property type="match status" value="1"/>
</dbReference>
<dbReference type="PROSITE" id="PS50893">
    <property type="entry name" value="ABC_TRANSPORTER_2"/>
    <property type="match status" value="1"/>
</dbReference>
<dbReference type="PROSITE" id="PS51243">
    <property type="entry name" value="CCMA"/>
    <property type="match status" value="1"/>
</dbReference>
<protein>
    <recommendedName>
        <fullName evidence="1">Cytochrome c biogenesis ATP-binding export protein CcmA</fullName>
        <ecNumber evidence="1">7.6.2.5</ecNumber>
    </recommendedName>
    <alternativeName>
        <fullName evidence="1">Heme exporter protein A</fullName>
    </alternativeName>
</protein>
<sequence>MLEAKNLTCIRDDRCLFQQLSFCIAPGEIVQIEGPNGAGKTSLLRILAGLAEADEGQVNWRDKNIRRDRAKYHQDLLFLGHQPGIKSVLTPFENLLFYQSVFQKVDSAAIWQALAQVGLVGYEDLPVSQLSAGQQRRVALARLWLSPAPLWILDEPLTAIDKQGVSTLLALFVQHAAKGGMVLLTTHQDLGAVSHNVRKICLANTQEKSCLSACCAVN</sequence>
<gene>
    <name evidence="1" type="primary">ccmA</name>
    <name type="ordered locus">YPO2734</name>
    <name type="ordered locus">y1567</name>
    <name type="ordered locus">YP_2430</name>
</gene>
<organism>
    <name type="scientific">Yersinia pestis</name>
    <dbReference type="NCBI Taxonomy" id="632"/>
    <lineage>
        <taxon>Bacteria</taxon>
        <taxon>Pseudomonadati</taxon>
        <taxon>Pseudomonadota</taxon>
        <taxon>Gammaproteobacteria</taxon>
        <taxon>Enterobacterales</taxon>
        <taxon>Yersiniaceae</taxon>
        <taxon>Yersinia</taxon>
    </lineage>
</organism>
<reference key="1">
    <citation type="journal article" date="2001" name="Nature">
        <title>Genome sequence of Yersinia pestis, the causative agent of plague.</title>
        <authorList>
            <person name="Parkhill J."/>
            <person name="Wren B.W."/>
            <person name="Thomson N.R."/>
            <person name="Titball R.W."/>
            <person name="Holden M.T.G."/>
            <person name="Prentice M.B."/>
            <person name="Sebaihia M."/>
            <person name="James K.D."/>
            <person name="Churcher C.M."/>
            <person name="Mungall K.L."/>
            <person name="Baker S."/>
            <person name="Basham D."/>
            <person name="Bentley S.D."/>
            <person name="Brooks K."/>
            <person name="Cerdeno-Tarraga A.-M."/>
            <person name="Chillingworth T."/>
            <person name="Cronin A."/>
            <person name="Davies R.M."/>
            <person name="Davis P."/>
            <person name="Dougan G."/>
            <person name="Feltwell T."/>
            <person name="Hamlin N."/>
            <person name="Holroyd S."/>
            <person name="Jagels K."/>
            <person name="Karlyshev A.V."/>
            <person name="Leather S."/>
            <person name="Moule S."/>
            <person name="Oyston P.C.F."/>
            <person name="Quail M.A."/>
            <person name="Rutherford K.M."/>
            <person name="Simmonds M."/>
            <person name="Skelton J."/>
            <person name="Stevens K."/>
            <person name="Whitehead S."/>
            <person name="Barrell B.G."/>
        </authorList>
    </citation>
    <scope>NUCLEOTIDE SEQUENCE [LARGE SCALE GENOMIC DNA]</scope>
    <source>
        <strain>CO-92 / Biovar Orientalis</strain>
    </source>
</reference>
<reference key="2">
    <citation type="journal article" date="2002" name="J. Bacteriol.">
        <title>Genome sequence of Yersinia pestis KIM.</title>
        <authorList>
            <person name="Deng W."/>
            <person name="Burland V."/>
            <person name="Plunkett G. III"/>
            <person name="Boutin A."/>
            <person name="Mayhew G.F."/>
            <person name="Liss P."/>
            <person name="Perna N.T."/>
            <person name="Rose D.J."/>
            <person name="Mau B."/>
            <person name="Zhou S."/>
            <person name="Schwartz D.C."/>
            <person name="Fetherston J.D."/>
            <person name="Lindler L.E."/>
            <person name="Brubaker R.R."/>
            <person name="Plano G.V."/>
            <person name="Straley S.C."/>
            <person name="McDonough K.A."/>
            <person name="Nilles M.L."/>
            <person name="Matson J.S."/>
            <person name="Blattner F.R."/>
            <person name="Perry R.D."/>
        </authorList>
    </citation>
    <scope>NUCLEOTIDE SEQUENCE [LARGE SCALE GENOMIC DNA]</scope>
    <source>
        <strain>KIM10+ / Biovar Mediaevalis</strain>
    </source>
</reference>
<reference key="3">
    <citation type="journal article" date="2004" name="DNA Res.">
        <title>Complete genome sequence of Yersinia pestis strain 91001, an isolate avirulent to humans.</title>
        <authorList>
            <person name="Song Y."/>
            <person name="Tong Z."/>
            <person name="Wang J."/>
            <person name="Wang L."/>
            <person name="Guo Z."/>
            <person name="Han Y."/>
            <person name="Zhang J."/>
            <person name="Pei D."/>
            <person name="Zhou D."/>
            <person name="Qin H."/>
            <person name="Pang X."/>
            <person name="Han Y."/>
            <person name="Zhai J."/>
            <person name="Li M."/>
            <person name="Cui B."/>
            <person name="Qi Z."/>
            <person name="Jin L."/>
            <person name="Dai R."/>
            <person name="Chen F."/>
            <person name="Li S."/>
            <person name="Ye C."/>
            <person name="Du Z."/>
            <person name="Lin W."/>
            <person name="Wang J."/>
            <person name="Yu J."/>
            <person name="Yang H."/>
            <person name="Wang J."/>
            <person name="Huang P."/>
            <person name="Yang R."/>
        </authorList>
    </citation>
    <scope>NUCLEOTIDE SEQUENCE [LARGE SCALE GENOMIC DNA]</scope>
    <source>
        <strain>91001 / Biovar Mediaevalis</strain>
    </source>
</reference>
<feature type="chain" id="PRO_0000092226" description="Cytochrome c biogenesis ATP-binding export protein CcmA">
    <location>
        <begin position="1"/>
        <end position="218"/>
    </location>
</feature>
<feature type="domain" description="ABC transporter" evidence="1">
    <location>
        <begin position="2"/>
        <end position="217"/>
    </location>
</feature>
<feature type="binding site" evidence="1">
    <location>
        <begin position="34"/>
        <end position="41"/>
    </location>
    <ligand>
        <name>ATP</name>
        <dbReference type="ChEBI" id="CHEBI:30616"/>
    </ligand>
</feature>
<comment type="function">
    <text evidence="1">Part of the ABC transporter complex CcmAB involved in the biogenesis of c-type cytochromes; once thought to export heme, this seems not to be the case, but its exact role is uncertain. Responsible for energy coupling to the transport system.</text>
</comment>
<comment type="catalytic activity">
    <reaction evidence="1">
        <text>heme b(in) + ATP + H2O = heme b(out) + ADP + phosphate + H(+)</text>
        <dbReference type="Rhea" id="RHEA:19261"/>
        <dbReference type="ChEBI" id="CHEBI:15377"/>
        <dbReference type="ChEBI" id="CHEBI:15378"/>
        <dbReference type="ChEBI" id="CHEBI:30616"/>
        <dbReference type="ChEBI" id="CHEBI:43474"/>
        <dbReference type="ChEBI" id="CHEBI:60344"/>
        <dbReference type="ChEBI" id="CHEBI:456216"/>
        <dbReference type="EC" id="7.6.2.5"/>
    </reaction>
</comment>
<comment type="subunit">
    <text evidence="1">The complex is composed of two ATP-binding proteins (CcmA) and two transmembrane proteins (CcmB).</text>
</comment>
<comment type="subcellular location">
    <subcellularLocation>
        <location evidence="1">Cell inner membrane</location>
        <topology evidence="1">Peripheral membrane protein</topology>
    </subcellularLocation>
</comment>
<comment type="similarity">
    <text evidence="1">Belongs to the ABC transporter superfamily. CcmA exporter (TC 3.A.1.107) family.</text>
</comment>
<name>CCMA_YERPE</name>
<proteinExistence type="inferred from homology"/>